<gene>
    <name evidence="1" type="primary">RBCS</name>
</gene>
<keyword id="KW-0113">Calvin cycle</keyword>
<keyword id="KW-0120">Carbon dioxide fixation</keyword>
<keyword id="KW-0150">Chloroplast</keyword>
<keyword id="KW-0601">Photorespiration</keyword>
<keyword id="KW-0602">Photosynthesis</keyword>
<keyword id="KW-0934">Plastid</keyword>
<keyword id="KW-0809">Transit peptide</keyword>
<proteinExistence type="evidence at transcript level"/>
<comment type="function">
    <text evidence="1">RuBisCO catalyzes two reactions: the carboxylation of D-ribulose 1,5-bisphosphate, the primary event in carbon dioxide fixation, as well as the oxidative fragmentation of the pentose substrate. Both reactions occur simultaneously and in competition at the same active site. Although the small subunit is not catalytic it is essential for maximal activity.</text>
</comment>
<comment type="subunit">
    <text evidence="1">Heterohexadecamer of 8 large and 8 small subunits.</text>
</comment>
<comment type="subcellular location">
    <subcellularLocation>
        <location evidence="1">Plastid</location>
        <location evidence="1">Chloroplast</location>
    </subcellularLocation>
</comment>
<comment type="miscellaneous">
    <text evidence="1">The basic functional RuBisCO is composed of a large chain homodimer in a 'head-to-tail' conformation. In form I RuBisCO this homodimer is arranged in a barrel-like tetramer with the small subunits forming a tetrameric 'cap' on each end of the 'barrel'.</text>
</comment>
<comment type="similarity">
    <text evidence="1">Belongs to the RuBisCO small chain family.</text>
</comment>
<reference key="1">
    <citation type="journal article" date="1988" name="Nucleic Acids Res.">
        <title>Nucleotide sequence of a full length cDNA clone of ribulose bisphosphate carboxylase small subunit gene from green dark-grown pine (Pinus tunbergii) seedling.</title>
        <authorList>
            <person name="Yamamoto N."/>
            <person name="Kano-Murakami Y."/>
            <person name="Matsuoka M."/>
            <person name="Ohashi Y."/>
            <person name="Tanaka Y."/>
        </authorList>
    </citation>
    <scope>NUCLEOTIDE SEQUENCE [MRNA]</scope>
</reference>
<dbReference type="EMBL" id="X13408">
    <property type="protein sequence ID" value="CAA31774.1"/>
    <property type="molecule type" value="mRNA"/>
</dbReference>
<dbReference type="PIR" id="S02046">
    <property type="entry name" value="RKSZSJ"/>
</dbReference>
<dbReference type="SMR" id="P10053"/>
<dbReference type="GO" id="GO:0009507">
    <property type="term" value="C:chloroplast"/>
    <property type="evidence" value="ECO:0007669"/>
    <property type="project" value="UniProtKB-SubCell"/>
</dbReference>
<dbReference type="GO" id="GO:0016984">
    <property type="term" value="F:ribulose-bisphosphate carboxylase activity"/>
    <property type="evidence" value="ECO:0007669"/>
    <property type="project" value="UniProtKB-UniRule"/>
</dbReference>
<dbReference type="GO" id="GO:0009853">
    <property type="term" value="P:photorespiration"/>
    <property type="evidence" value="ECO:0007669"/>
    <property type="project" value="UniProtKB-KW"/>
</dbReference>
<dbReference type="GO" id="GO:0019253">
    <property type="term" value="P:reductive pentose-phosphate cycle"/>
    <property type="evidence" value="ECO:0007669"/>
    <property type="project" value="UniProtKB-UniRule"/>
</dbReference>
<dbReference type="CDD" id="cd03527">
    <property type="entry name" value="RuBisCO_small"/>
    <property type="match status" value="1"/>
</dbReference>
<dbReference type="FunFam" id="3.30.190.10:FF:000001">
    <property type="entry name" value="Ribulose bisphosphate carboxylase small chain, chloroplastic"/>
    <property type="match status" value="1"/>
</dbReference>
<dbReference type="Gene3D" id="3.30.190.10">
    <property type="entry name" value="Ribulose bisphosphate carboxylase, small subunit"/>
    <property type="match status" value="1"/>
</dbReference>
<dbReference type="HAMAP" id="MF_00859">
    <property type="entry name" value="RuBisCO_S_bact"/>
    <property type="match status" value="1"/>
</dbReference>
<dbReference type="InterPro" id="IPR024681">
    <property type="entry name" value="RuBisCO_ssu"/>
</dbReference>
<dbReference type="InterPro" id="IPR000894">
    <property type="entry name" value="RuBisCO_ssu_dom"/>
</dbReference>
<dbReference type="InterPro" id="IPR036385">
    <property type="entry name" value="RuBisCO_ssu_sf"/>
</dbReference>
<dbReference type="PANTHER" id="PTHR31262">
    <property type="entry name" value="RIBULOSE BISPHOSPHATE CARBOXYLASE SMALL CHAIN 1, CHLOROPLASTIC"/>
    <property type="match status" value="1"/>
</dbReference>
<dbReference type="PANTHER" id="PTHR31262:SF10">
    <property type="entry name" value="RIBULOSE BISPHOSPHATE CARBOXYLASE SMALL SUBUNIT 1A, CHLOROPLASTIC-RELATED"/>
    <property type="match status" value="1"/>
</dbReference>
<dbReference type="Pfam" id="PF00101">
    <property type="entry name" value="RuBisCO_small"/>
    <property type="match status" value="1"/>
</dbReference>
<dbReference type="PRINTS" id="PR00152">
    <property type="entry name" value="RUBISCOSMALL"/>
</dbReference>
<dbReference type="SMART" id="SM00961">
    <property type="entry name" value="RuBisCO_small"/>
    <property type="match status" value="1"/>
</dbReference>
<dbReference type="SUPFAM" id="SSF55239">
    <property type="entry name" value="RuBisCO, small subunit"/>
    <property type="match status" value="1"/>
</dbReference>
<organism>
    <name type="scientific">Pinus thunbergii</name>
    <name type="common">Japanese black pine</name>
    <name type="synonym">Pinus thunbergiana</name>
    <dbReference type="NCBI Taxonomy" id="3350"/>
    <lineage>
        <taxon>Eukaryota</taxon>
        <taxon>Viridiplantae</taxon>
        <taxon>Streptophyta</taxon>
        <taxon>Embryophyta</taxon>
        <taxon>Tracheophyta</taxon>
        <taxon>Spermatophyta</taxon>
        <taxon>Pinopsida</taxon>
        <taxon>Pinidae</taxon>
        <taxon>Conifers I</taxon>
        <taxon>Pinales</taxon>
        <taxon>Pinaceae</taxon>
        <taxon>Pinus</taxon>
        <taxon>Pinus subgen. Pinus</taxon>
    </lineage>
</organism>
<evidence type="ECO:0000255" key="1">
    <source>
        <dbReference type="HAMAP-Rule" id="MF_00860"/>
    </source>
</evidence>
<protein>
    <recommendedName>
        <fullName evidence="1">Ribulose bisphosphate carboxylase small subunit, chloroplastic</fullName>
        <shortName evidence="1">RuBisCO small subunit</shortName>
    </recommendedName>
</protein>
<sequence>MATGAGAGAATVVSAFTGLKSTAQFPSSFKMSNAAAEWEQKTTSNGGRVRCMQVWPPFGNPKFETLSYLPTLTEEQLVKEVEYLLRNKWVPCLEFDLEGSISRKYNRSPGYYDGRYWVMWKLPMFGCTEASQVINEVRECAKAYPKAFIRVIGFDNVRQVQCISFIVHKPE</sequence>
<accession>P10053</accession>
<feature type="transit peptide" description="Chloroplast" evidence="1">
    <location>
        <begin position="1"/>
        <end position="50"/>
    </location>
</feature>
<feature type="chain" id="PRO_0000031545" description="Ribulose bisphosphate carboxylase small subunit, chloroplastic" evidence="1">
    <location>
        <begin position="51"/>
        <end position="171"/>
    </location>
</feature>
<name>RBS_PINTH</name>